<feature type="signal peptide" evidence="1">
    <location>
        <begin position="1"/>
        <end position="23"/>
    </location>
</feature>
<feature type="chain" id="PRO_0000106099" description="Non-structural protein 7">
    <location>
        <begin position="24"/>
        <end position="78"/>
    </location>
</feature>
<feature type="topological domain" description="Lumenal" evidence="3">
    <location>
        <begin position="24"/>
        <end position="57"/>
    </location>
</feature>
<feature type="transmembrane region" description="Helical" evidence="3">
    <location>
        <begin position="58"/>
        <end position="78"/>
    </location>
</feature>
<feature type="region of interest" description="Interaction with PPP1CC/PP1-gamma" evidence="2">
    <location>
        <begin position="59"/>
        <end position="65"/>
    </location>
</feature>
<feature type="sequence conflict" description="In Ref. 2; AAA47916." evidence="5" ref="2">
    <original>N</original>
    <variation>D</variation>
    <location>
        <position position="30"/>
    </location>
</feature>
<feature type="sequence conflict" description="In Ref. 2; AAA47916." evidence="5" ref="2">
    <original>M</original>
    <variation>V</variation>
    <location>
        <position position="78"/>
    </location>
</feature>
<sequence length="78" mass="9130">MLVFLHAVFITVLILLLIGRLQLLERLLLNHSFNLKTVNDFNILYRSLAETRLLKVVLRVIFLVLLGFCCYRLLVTLM</sequence>
<organism>
    <name type="scientific">Porcine transmissible gastroenteritis coronavirus (strain Purdue)</name>
    <name type="common">TGEV</name>
    <dbReference type="NCBI Taxonomy" id="11151"/>
    <lineage>
        <taxon>Viruses</taxon>
        <taxon>Riboviria</taxon>
        <taxon>Orthornavirae</taxon>
        <taxon>Pisuviricota</taxon>
        <taxon>Pisoniviricetes</taxon>
        <taxon>Nidovirales</taxon>
        <taxon>Cornidovirineae</taxon>
        <taxon>Coronaviridae</taxon>
        <taxon>Orthocoronavirinae</taxon>
        <taxon>Alphacoronavirus</taxon>
        <taxon>Tegacovirus</taxon>
        <taxon>Alphacoronavirus 1</taxon>
    </lineage>
</organism>
<reference key="1">
    <citation type="journal article" date="1987" name="Biochimie">
        <title>Enteric coronavirus TGEV: partial sequence of the genomic RNA, its organization and expression.</title>
        <authorList>
            <person name="Rasschaert D."/>
            <person name="Gelfi J."/>
            <person name="Laude H."/>
        </authorList>
    </citation>
    <scope>NUCLEOTIDE SEQUENCE [GENOMIC RNA]</scope>
</reference>
<reference key="2">
    <citation type="journal article" date="1986" name="Virology">
        <title>Sequence analysis of the porcine transmissible gastroenteritis coronavirus nucleocapsid protein gene.</title>
        <authorList>
            <person name="Kapke P.A."/>
            <person name="Brian D.A."/>
        </authorList>
    </citation>
    <scope>NUCLEOTIDE SEQUENCE [GENOMIC RNA]</scope>
</reference>
<reference key="3">
    <citation type="journal article" date="2000" name="Proc. Natl. Acad. Sci. U.S.A.">
        <title>Engineering the largest RNA virus genome as an infectious bacterial artificial chromosome.</title>
        <authorList>
            <person name="Almazan F."/>
            <person name="Gonzalez J.M."/>
            <person name="Penzes Z."/>
            <person name="Izeta A."/>
            <person name="Calvo E."/>
            <person name="Plana-Duran J."/>
            <person name="Enjuanes L."/>
        </authorList>
    </citation>
    <scope>NUCLEOTIDE SEQUENCE [GENOMIC RNA]</scope>
    <source>
        <strain>Isolate PUR46-MAD</strain>
    </source>
</reference>
<reference key="4">
    <citation type="journal article" date="2004" name="J. Vet. Med. Sci.">
        <title>Sequence comparison of the ORF 7 region of transmissible gastroenteritis viruses isolated in Japan.</title>
        <authorList>
            <person name="Taniguchi T."/>
            <person name="Taniguchi R."/>
            <person name="Takahashi A."/>
            <person name="Hayashidani H."/>
            <person name="Hanaki K."/>
            <person name="Shirai J."/>
            <person name="Honda E."/>
        </authorList>
    </citation>
    <scope>NUCLEOTIDE SEQUENCE [GENOMIC RNA]</scope>
</reference>
<reference key="5">
    <citation type="submission" date="2006-02" db="EMBL/GenBank/DDBJ databases">
        <title>Cloning and sequence analysis of Orf7 gene from transmissible gastroenteritis virus of porcine strain SC-Y.</title>
        <authorList>
            <person name="Ou Y."/>
            <person name="Yan Q.G."/>
            <person name="Guo W.Z."/>
        </authorList>
    </citation>
    <scope>NUCLEOTIDE SEQUENCE [MRNA]</scope>
    <source>
        <strain>Isolate SC-1</strain>
        <strain>SC-Y</strain>
    </source>
</reference>
<reference key="6">
    <citation type="submission" date="2006-03" db="EMBL/GenBank/DDBJ databases">
        <title>Cloning and Seqence Analysis of Genome of Transmissible gastroenteritis virus SC-Y strain.</title>
        <authorList>
            <person name="Song Z.H."/>
            <person name="Guo W.Z."/>
            <person name="Yin H.P."/>
            <person name="Zeng Z.Y."/>
            <person name="Ou Y."/>
            <person name="Han G.Q."/>
            <person name="Sun Z.Y."/>
        </authorList>
    </citation>
    <scope>NUCLEOTIDE SEQUENCE [GENOMIC RNA]</scope>
    <source>
        <strain>SC-Y</strain>
    </source>
</reference>
<reference key="7">
    <citation type="journal article" date="1992" name="Virology">
        <title>The 9-kDa hydrophobic protein encoded at the 3' end of the porcine transmissible gastroenteritis coronavirus genome is membrane-associated.</title>
        <authorList>
            <person name="Tung F.Y.T."/>
            <person name="Abraham S."/>
            <person name="Sethna M."/>
            <person name="Hung S.-L."/>
            <person name="Sethna P.B."/>
            <person name="Hogue B.A."/>
            <person name="Brian D.A."/>
        </authorList>
    </citation>
    <scope>SUBCELLULAR LOCATION</scope>
</reference>
<reference key="8">
    <citation type="journal article" date="2011" name="PLoS Pathog.">
        <title>Coronavirus gene 7 counteracts host defenses and modulates virus virulence.</title>
        <authorList>
            <person name="Cruz J.L."/>
            <person name="Sola I."/>
            <person name="Becares M."/>
            <person name="Alberca B."/>
            <person name="Plana J."/>
            <person name="Enjuanes L."/>
            <person name="Zuniga S."/>
        </authorList>
    </citation>
    <scope>FUNCTION</scope>
    <scope>SUBUNIT</scope>
    <scope>INTERACTION WITH HOST SERINE/THREONINE-PROTEIN PHOSPHATASE PP1CCC</scope>
</reference>
<reference key="9">
    <citation type="journal article" date="2022" name="Curr. Opin. Immunol.">
        <title>Move and countermove: the integrated stress response in picorna- and coronavirus-infected cells.</title>
        <authorList>
            <person name="Aloise C."/>
            <person name="Schipper J.G."/>
            <person name="de Groot R.J."/>
            <person name="van Kuppeveld F.J."/>
        </authorList>
    </citation>
    <scope>REVIEW</scope>
</reference>
<accession>P04136</accession>
<accession>Q779N2</accession>
<keyword id="KW-1043">Host membrane</keyword>
<keyword id="KW-0472">Membrane</keyword>
<keyword id="KW-1185">Reference proteome</keyword>
<keyword id="KW-0732">Signal</keyword>
<keyword id="KW-0812">Transmembrane</keyword>
<keyword id="KW-1133">Transmembrane helix</keyword>
<proteinExistence type="evidence at protein level"/>
<comment type="function">
    <text evidence="2">Inhibits the integrated stress response (ISR) in the infected cell by promoting EIF2S1/eIF-2alpha dephosphorylation (PubMed:21695242). Acts as a functional homolog of host PPP1R15A/GADD34 to recruit PP1 phosphatase and dephosphorylate host EIF2S1/eIF-2alpha (PubMed:21695242). May function in the formation of membrane-bound replication complexes or in the assembly of the virus.</text>
</comment>
<comment type="subunit">
    <text evidence="2">Interacts with serine/threonine-protein phosphatase PPP1CC/PP1-gamma; this interaction; this interaction probably promotes EIF2S1/eIF-2alpha dephosphorylation.</text>
</comment>
<comment type="subcellular location">
    <subcellularLocation>
        <location evidence="5">Host membrane</location>
        <topology evidence="3">Single-pass membrane protein</topology>
    </subcellularLocation>
</comment>
<comment type="similarity">
    <text evidence="5">Belongs to the coronaviruses ns7/ns7a protein family.</text>
</comment>
<name>NS7_CVPPU</name>
<protein>
    <recommendedName>
        <fullName>Non-structural protein 7</fullName>
        <shortName>ns7</shortName>
    </recommendedName>
    <alternativeName>
        <fullName>9 kDa hydrophobic protein</fullName>
        <shortName>HP</shortName>
    </alternativeName>
    <alternativeName>
        <fullName>Accessory protein 7</fullName>
        <shortName evidence="4">AcP7</shortName>
    </alternativeName>
    <alternativeName>
        <fullName>X3 protein</fullName>
    </alternativeName>
</protein>
<dbReference type="EMBL" id="X06371">
    <property type="protein sequence ID" value="CAA29675.1"/>
    <property type="molecule type" value="Genomic_RNA"/>
</dbReference>
<dbReference type="EMBL" id="M14878">
    <property type="protein sequence ID" value="AAA47916.1"/>
    <property type="molecule type" value="Genomic_RNA"/>
</dbReference>
<dbReference type="EMBL" id="AJ271965">
    <property type="protein sequence ID" value="CAB91151.1"/>
    <property type="molecule type" value="Genomic_RNA"/>
</dbReference>
<dbReference type="EMBL" id="AB115410">
    <property type="protein sequence ID" value="BAD34531.1"/>
    <property type="molecule type" value="Genomic_RNA"/>
</dbReference>
<dbReference type="EMBL" id="DQ437506">
    <property type="protein sequence ID" value="ABD78841.1"/>
    <property type="molecule type" value="mRNA"/>
</dbReference>
<dbReference type="EMBL" id="DQ437507">
    <property type="protein sequence ID" value="ABD78842.1"/>
    <property type="molecule type" value="mRNA"/>
</dbReference>
<dbReference type="EMBL" id="DQ443743">
    <property type="protein sequence ID" value="ABD97841.1"/>
    <property type="molecule type" value="Genomic_RNA"/>
</dbReference>
<dbReference type="PIR" id="S03937">
    <property type="entry name" value="QQIHPC"/>
</dbReference>
<dbReference type="Proteomes" id="UP000001440">
    <property type="component" value="Segment"/>
</dbReference>
<dbReference type="Proteomes" id="UP000158504">
    <property type="component" value="Genome"/>
</dbReference>
<dbReference type="GO" id="GO:0033644">
    <property type="term" value="C:host cell membrane"/>
    <property type="evidence" value="ECO:0007669"/>
    <property type="project" value="UniProtKB-SubCell"/>
</dbReference>
<dbReference type="GO" id="GO:0016020">
    <property type="term" value="C:membrane"/>
    <property type="evidence" value="ECO:0007669"/>
    <property type="project" value="UniProtKB-KW"/>
</dbReference>
<dbReference type="InterPro" id="IPR003449">
    <property type="entry name" value="Corona_7"/>
</dbReference>
<dbReference type="Pfam" id="PF02398">
    <property type="entry name" value="Corona_7"/>
    <property type="match status" value="2"/>
</dbReference>
<evidence type="ECO:0000255" key="1"/>
<evidence type="ECO:0000269" key="2">
    <source>
    </source>
</evidence>
<evidence type="ECO:0000303" key="3">
    <source>
    </source>
</evidence>
<evidence type="ECO:0000303" key="4">
    <source>
    </source>
</evidence>
<evidence type="ECO:0000305" key="5"/>
<organismHost>
    <name type="scientific">Sus scrofa</name>
    <name type="common">Pig</name>
    <dbReference type="NCBI Taxonomy" id="9823"/>
</organismHost>
<gene>
    <name type="ORF">7</name>
</gene>